<organism>
    <name type="scientific">Escherichia coli O45:K1 (strain S88 / ExPEC)</name>
    <dbReference type="NCBI Taxonomy" id="585035"/>
    <lineage>
        <taxon>Bacteria</taxon>
        <taxon>Pseudomonadati</taxon>
        <taxon>Pseudomonadota</taxon>
        <taxon>Gammaproteobacteria</taxon>
        <taxon>Enterobacterales</taxon>
        <taxon>Enterobacteriaceae</taxon>
        <taxon>Escherichia</taxon>
    </lineage>
</organism>
<protein>
    <recommendedName>
        <fullName evidence="1">Glucans biosynthesis protein C</fullName>
        <ecNumber evidence="1">2.1.-.-</ecNumber>
    </recommendedName>
</protein>
<feature type="chain" id="PRO_1000136562" description="Glucans biosynthesis protein C">
    <location>
        <begin position="1"/>
        <end position="385"/>
    </location>
</feature>
<feature type="transmembrane region" description="Helical" evidence="1">
    <location>
        <begin position="17"/>
        <end position="37"/>
    </location>
</feature>
<feature type="transmembrane region" description="Helical" evidence="1">
    <location>
        <begin position="60"/>
        <end position="80"/>
    </location>
</feature>
<feature type="transmembrane region" description="Helical" evidence="1">
    <location>
        <begin position="91"/>
        <end position="111"/>
    </location>
</feature>
<feature type="transmembrane region" description="Helical" evidence="1">
    <location>
        <begin position="137"/>
        <end position="157"/>
    </location>
</feature>
<feature type="transmembrane region" description="Helical" evidence="1">
    <location>
        <begin position="173"/>
        <end position="193"/>
    </location>
</feature>
<feature type="transmembrane region" description="Helical" evidence="1">
    <location>
        <begin position="212"/>
        <end position="232"/>
    </location>
</feature>
<feature type="transmembrane region" description="Helical" evidence="1">
    <location>
        <begin position="239"/>
        <end position="259"/>
    </location>
</feature>
<feature type="transmembrane region" description="Helical" evidence="1">
    <location>
        <begin position="274"/>
        <end position="294"/>
    </location>
</feature>
<feature type="transmembrane region" description="Helical" evidence="1">
    <location>
        <begin position="311"/>
        <end position="331"/>
    </location>
</feature>
<feature type="transmembrane region" description="Helical" evidence="1">
    <location>
        <begin position="338"/>
        <end position="358"/>
    </location>
</feature>
<gene>
    <name evidence="1" type="primary">mdoC</name>
    <name evidence="1" type="synonym">opgC</name>
    <name type="ordered locus">ECS88_1059</name>
</gene>
<dbReference type="EC" id="2.1.-.-" evidence="1"/>
<dbReference type="EMBL" id="CU928161">
    <property type="protein sequence ID" value="CAR02387.1"/>
    <property type="molecule type" value="Genomic_DNA"/>
</dbReference>
<dbReference type="RefSeq" id="WP_001070346.1">
    <property type="nucleotide sequence ID" value="NC_011742.1"/>
</dbReference>
<dbReference type="KEGG" id="ecz:ECS88_1059"/>
<dbReference type="HOGENOM" id="CLU_036182_2_0_6"/>
<dbReference type="UniPathway" id="UPA00637"/>
<dbReference type="Proteomes" id="UP000000747">
    <property type="component" value="Chromosome"/>
</dbReference>
<dbReference type="GO" id="GO:0005886">
    <property type="term" value="C:plasma membrane"/>
    <property type="evidence" value="ECO:0007669"/>
    <property type="project" value="UniProtKB-SubCell"/>
</dbReference>
<dbReference type="GO" id="GO:0016747">
    <property type="term" value="F:acyltransferase activity, transferring groups other than amino-acyl groups"/>
    <property type="evidence" value="ECO:0007669"/>
    <property type="project" value="InterPro"/>
</dbReference>
<dbReference type="GO" id="GO:0016741">
    <property type="term" value="F:transferase activity, transferring one-carbon groups"/>
    <property type="evidence" value="ECO:0007669"/>
    <property type="project" value="UniProtKB-UniRule"/>
</dbReference>
<dbReference type="GO" id="GO:0009250">
    <property type="term" value="P:glucan biosynthetic process"/>
    <property type="evidence" value="ECO:0007669"/>
    <property type="project" value="UniProtKB-UniRule"/>
</dbReference>
<dbReference type="HAMAP" id="MF_01066">
    <property type="entry name" value="MdoC_OpgC"/>
    <property type="match status" value="1"/>
</dbReference>
<dbReference type="InterPro" id="IPR002656">
    <property type="entry name" value="Acyl_transf_3_dom"/>
</dbReference>
<dbReference type="InterPro" id="IPR050623">
    <property type="entry name" value="Glucan_succinyl_AcylTrfase"/>
</dbReference>
<dbReference type="InterPro" id="IPR023723">
    <property type="entry name" value="Glucans_biosynth_C"/>
</dbReference>
<dbReference type="NCBIfam" id="NF003014">
    <property type="entry name" value="PRK03854.1"/>
    <property type="match status" value="1"/>
</dbReference>
<dbReference type="PANTHER" id="PTHR36927">
    <property type="entry name" value="BLR4337 PROTEIN"/>
    <property type="match status" value="1"/>
</dbReference>
<dbReference type="PANTHER" id="PTHR36927:SF3">
    <property type="entry name" value="GLUCANS BIOSYNTHESIS PROTEIN C"/>
    <property type="match status" value="1"/>
</dbReference>
<dbReference type="Pfam" id="PF01757">
    <property type="entry name" value="Acyl_transf_3"/>
    <property type="match status" value="1"/>
</dbReference>
<accession>B7MII7</accession>
<sequence>MNPVPAQREYFLDSIRAWLMLLGIPFHISLIYSSHTWHVNSAEPSLWLTLFNDFIHSFRMQVFFVISGYFSYMLFLRYPLKKWWKVRVERVGIPMLTAIPLLTLPQFIMLQYVKGKAESWPGLSLYDKYNTLAWELISHLWFLLVLVVMTTLCVWIFKRIRNNLENSDKTNKKFSMVKLSVIFLCLGIGYAVIRRTIFIVYPPILSNGMFNFIVMQTLFYLPFFILGALAFIFPHLKALFTTPSRGCTFAAALAFVAYLLNQRYGSGDAWMYETESVITMVLGLWMVNVVFSFGHRLLNFQSARVTYFVNASLFIYLVHHPLTLFFGAYITPHITSNWLGFLCGLIFVVGIAIILYEIHLRIPLLKFLFSGKPVVKRENDKAPAR</sequence>
<evidence type="ECO:0000255" key="1">
    <source>
        <dbReference type="HAMAP-Rule" id="MF_01066"/>
    </source>
</evidence>
<reference key="1">
    <citation type="journal article" date="2009" name="PLoS Genet.">
        <title>Organised genome dynamics in the Escherichia coli species results in highly diverse adaptive paths.</title>
        <authorList>
            <person name="Touchon M."/>
            <person name="Hoede C."/>
            <person name="Tenaillon O."/>
            <person name="Barbe V."/>
            <person name="Baeriswyl S."/>
            <person name="Bidet P."/>
            <person name="Bingen E."/>
            <person name="Bonacorsi S."/>
            <person name="Bouchier C."/>
            <person name="Bouvet O."/>
            <person name="Calteau A."/>
            <person name="Chiapello H."/>
            <person name="Clermont O."/>
            <person name="Cruveiller S."/>
            <person name="Danchin A."/>
            <person name="Diard M."/>
            <person name="Dossat C."/>
            <person name="Karoui M.E."/>
            <person name="Frapy E."/>
            <person name="Garry L."/>
            <person name="Ghigo J.M."/>
            <person name="Gilles A.M."/>
            <person name="Johnson J."/>
            <person name="Le Bouguenec C."/>
            <person name="Lescat M."/>
            <person name="Mangenot S."/>
            <person name="Martinez-Jehanne V."/>
            <person name="Matic I."/>
            <person name="Nassif X."/>
            <person name="Oztas S."/>
            <person name="Petit M.A."/>
            <person name="Pichon C."/>
            <person name="Rouy Z."/>
            <person name="Ruf C.S."/>
            <person name="Schneider D."/>
            <person name="Tourret J."/>
            <person name="Vacherie B."/>
            <person name="Vallenet D."/>
            <person name="Medigue C."/>
            <person name="Rocha E.P.C."/>
            <person name="Denamur E."/>
        </authorList>
    </citation>
    <scope>NUCLEOTIDE SEQUENCE [LARGE SCALE GENOMIC DNA]</scope>
    <source>
        <strain>S88 / ExPEC</strain>
    </source>
</reference>
<comment type="function">
    <text evidence="1">Necessary for the succinyl substitution of periplasmic glucans. Could catalyze the transfer of succinyl residues from the cytoplasmic side of the membrane to the nascent glucan backbones on the periplasmic side of the membrane.</text>
</comment>
<comment type="pathway">
    <text evidence="1">Glycan metabolism; osmoregulated periplasmic glucan (OPG) biosynthesis.</text>
</comment>
<comment type="subcellular location">
    <subcellularLocation>
        <location evidence="1">Cell membrane</location>
        <topology evidence="1">Multi-pass membrane protein</topology>
    </subcellularLocation>
</comment>
<comment type="similarity">
    <text evidence="1">Belongs to the acyltransferase 3 family. OpgC subfamily.</text>
</comment>
<proteinExistence type="inferred from homology"/>
<keyword id="KW-0012">Acyltransferase</keyword>
<keyword id="KW-1003">Cell membrane</keyword>
<keyword id="KW-0472">Membrane</keyword>
<keyword id="KW-1185">Reference proteome</keyword>
<keyword id="KW-0808">Transferase</keyword>
<keyword id="KW-0812">Transmembrane</keyword>
<keyword id="KW-1133">Transmembrane helix</keyword>
<name>OPGC_ECO45</name>